<sequence length="287" mass="32435">MIKIGAHMPISKGFDRVPQDTVNIGGNSFQIFPHNARSWSAKLPSDEAATKFKREMKKHGIDWENAFCHSGYLINLASPKDDIWQKSVELLKKEVEICRKLGIRYLNIHPGSHLGTGEEEGIDRIVRGLNEVLNNTEGVVILLENVSQKGGNIGYKLEQLKKIRDLVDQRDRVAITYDTCHGFDSGYDITKKEGVEALLNEIESLFGLERLKMIHLNDSKYPLGAAKDRHERIGSGFIGEEGFAVFFSFKEIQEVPWILETPGGNEEHAEDIKKVFEIIEKFGIEVD</sequence>
<proteinExistence type="evidence at protein level"/>
<protein>
    <recommendedName>
        <fullName evidence="1">Probable endonuclease 4</fullName>
        <ecNumber evidence="1">3.1.21.2</ecNumber>
    </recommendedName>
    <alternativeName>
        <fullName evidence="1">Endodeoxyribonuclease IV</fullName>
    </alternativeName>
    <alternativeName>
        <fullName evidence="1">Endonuclease IV</fullName>
    </alternativeName>
</protein>
<dbReference type="EC" id="3.1.21.2" evidence="1"/>
<dbReference type="EMBL" id="AE000512">
    <property type="protein sequence ID" value="AAD35449.1"/>
    <property type="molecule type" value="Genomic_DNA"/>
</dbReference>
<dbReference type="PIR" id="B72387">
    <property type="entry name" value="B72387"/>
</dbReference>
<dbReference type="RefSeq" id="NP_228173.1">
    <property type="nucleotide sequence ID" value="NC_000853.1"/>
</dbReference>
<dbReference type="RefSeq" id="WP_010865102.1">
    <property type="nucleotide sequence ID" value="NC_000853.1"/>
</dbReference>
<dbReference type="PDB" id="2X7V">
    <property type="method" value="X-ray"/>
    <property type="resolution" value="2.30 A"/>
    <property type="chains" value="A=1-287"/>
</dbReference>
<dbReference type="PDB" id="2X7W">
    <property type="method" value="X-ray"/>
    <property type="resolution" value="2.36 A"/>
    <property type="chains" value="A=1-287"/>
</dbReference>
<dbReference type="PDB" id="4HNO">
    <property type="method" value="X-ray"/>
    <property type="resolution" value="0.92 A"/>
    <property type="chains" value="A=2-285"/>
</dbReference>
<dbReference type="PDBsum" id="2X7V"/>
<dbReference type="PDBsum" id="2X7W"/>
<dbReference type="PDBsum" id="4HNO"/>
<dbReference type="SMR" id="Q9WYJ7"/>
<dbReference type="FunCoup" id="Q9WYJ7">
    <property type="interactions" value="123"/>
</dbReference>
<dbReference type="STRING" id="243274.TM_0362"/>
<dbReference type="PaxDb" id="243274-THEMA_02905"/>
<dbReference type="EnsemblBacteria" id="AAD35449">
    <property type="protein sequence ID" value="AAD35449"/>
    <property type="gene ID" value="TM_0362"/>
</dbReference>
<dbReference type="KEGG" id="tma:TM0362"/>
<dbReference type="KEGG" id="tmi:THEMA_02905"/>
<dbReference type="KEGG" id="tmm:Tmari_0360"/>
<dbReference type="KEGG" id="tmw:THMA_0370"/>
<dbReference type="eggNOG" id="COG0648">
    <property type="taxonomic scope" value="Bacteria"/>
</dbReference>
<dbReference type="InParanoid" id="Q9WYJ7"/>
<dbReference type="OrthoDB" id="9805666at2"/>
<dbReference type="BRENDA" id="3.1.21.2">
    <property type="organism ID" value="6331"/>
</dbReference>
<dbReference type="EvolutionaryTrace" id="Q9WYJ7"/>
<dbReference type="Proteomes" id="UP000008183">
    <property type="component" value="Chromosome"/>
</dbReference>
<dbReference type="GO" id="GO:0008833">
    <property type="term" value="F:deoxyribonuclease IV (phage-T4-induced) activity"/>
    <property type="evidence" value="ECO:0007669"/>
    <property type="project" value="UniProtKB-UniRule"/>
</dbReference>
<dbReference type="GO" id="GO:0003677">
    <property type="term" value="F:DNA binding"/>
    <property type="evidence" value="ECO:0007669"/>
    <property type="project" value="InterPro"/>
</dbReference>
<dbReference type="GO" id="GO:0003906">
    <property type="term" value="F:DNA-(apurinic or apyrimidinic site) endonuclease activity"/>
    <property type="evidence" value="ECO:0000318"/>
    <property type="project" value="GO_Central"/>
</dbReference>
<dbReference type="GO" id="GO:0008081">
    <property type="term" value="F:phosphoric diester hydrolase activity"/>
    <property type="evidence" value="ECO:0000318"/>
    <property type="project" value="GO_Central"/>
</dbReference>
<dbReference type="GO" id="GO:0008270">
    <property type="term" value="F:zinc ion binding"/>
    <property type="evidence" value="ECO:0007669"/>
    <property type="project" value="UniProtKB-UniRule"/>
</dbReference>
<dbReference type="GO" id="GO:0006284">
    <property type="term" value="P:base-excision repair"/>
    <property type="evidence" value="ECO:0000318"/>
    <property type="project" value="GO_Central"/>
</dbReference>
<dbReference type="CDD" id="cd00019">
    <property type="entry name" value="AP2Ec"/>
    <property type="match status" value="1"/>
</dbReference>
<dbReference type="FunFam" id="3.20.20.150:FF:000001">
    <property type="entry name" value="Probable endonuclease 4"/>
    <property type="match status" value="1"/>
</dbReference>
<dbReference type="Gene3D" id="3.20.20.150">
    <property type="entry name" value="Divalent-metal-dependent TIM barrel enzymes"/>
    <property type="match status" value="1"/>
</dbReference>
<dbReference type="HAMAP" id="MF_00152">
    <property type="entry name" value="Nfo"/>
    <property type="match status" value="1"/>
</dbReference>
<dbReference type="InterPro" id="IPR001719">
    <property type="entry name" value="AP_endonuc_2"/>
</dbReference>
<dbReference type="InterPro" id="IPR018246">
    <property type="entry name" value="AP_endonuc_F2_Zn_BS"/>
</dbReference>
<dbReference type="InterPro" id="IPR036237">
    <property type="entry name" value="Xyl_isomerase-like_sf"/>
</dbReference>
<dbReference type="InterPro" id="IPR013022">
    <property type="entry name" value="Xyl_isomerase-like_TIM-brl"/>
</dbReference>
<dbReference type="NCBIfam" id="TIGR00587">
    <property type="entry name" value="nfo"/>
    <property type="match status" value="1"/>
</dbReference>
<dbReference type="PANTHER" id="PTHR21445:SF0">
    <property type="entry name" value="APURINIC-APYRIMIDINIC ENDONUCLEASE"/>
    <property type="match status" value="1"/>
</dbReference>
<dbReference type="PANTHER" id="PTHR21445">
    <property type="entry name" value="ENDONUCLEASE IV ENDODEOXYRIBONUCLEASE IV"/>
    <property type="match status" value="1"/>
</dbReference>
<dbReference type="Pfam" id="PF01261">
    <property type="entry name" value="AP_endonuc_2"/>
    <property type="match status" value="1"/>
</dbReference>
<dbReference type="SMART" id="SM00518">
    <property type="entry name" value="AP2Ec"/>
    <property type="match status" value="1"/>
</dbReference>
<dbReference type="SUPFAM" id="SSF51658">
    <property type="entry name" value="Xylose isomerase-like"/>
    <property type="match status" value="1"/>
</dbReference>
<dbReference type="PROSITE" id="PS00729">
    <property type="entry name" value="AP_NUCLEASE_F2_1"/>
    <property type="match status" value="1"/>
</dbReference>
<dbReference type="PROSITE" id="PS00730">
    <property type="entry name" value="AP_NUCLEASE_F2_2"/>
    <property type="match status" value="1"/>
</dbReference>
<dbReference type="PROSITE" id="PS00731">
    <property type="entry name" value="AP_NUCLEASE_F2_3"/>
    <property type="match status" value="1"/>
</dbReference>
<dbReference type="PROSITE" id="PS51432">
    <property type="entry name" value="AP_NUCLEASE_F2_4"/>
    <property type="match status" value="1"/>
</dbReference>
<comment type="function">
    <text evidence="1">Endonuclease IV plays a role in DNA repair. It cleaves phosphodiester bonds at apurinic or apyrimidinic (AP) sites, generating a 3'-hydroxyl group and a 5'-terminal sugar phosphate.</text>
</comment>
<comment type="catalytic activity">
    <reaction evidence="1">
        <text>Endonucleolytic cleavage to 5'-phosphooligonucleotide end-products.</text>
        <dbReference type="EC" id="3.1.21.2"/>
    </reaction>
</comment>
<comment type="cofactor">
    <cofactor evidence="1">
        <name>Zn(2+)</name>
        <dbReference type="ChEBI" id="CHEBI:29105"/>
    </cofactor>
    <text evidence="1">Binds 3 Zn(2+) ions.</text>
</comment>
<comment type="similarity">
    <text evidence="1">Belongs to the AP endonuclease 2 family.</text>
</comment>
<feature type="chain" id="PRO_0000190880" description="Probable endonuclease 4">
    <location>
        <begin position="1"/>
        <end position="287"/>
    </location>
</feature>
<feature type="binding site" evidence="1">
    <location>
        <position position="69"/>
    </location>
    <ligand>
        <name>Zn(2+)</name>
        <dbReference type="ChEBI" id="CHEBI:29105"/>
        <label>1</label>
    </ligand>
</feature>
<feature type="binding site" evidence="1">
    <location>
        <position position="109"/>
    </location>
    <ligand>
        <name>Zn(2+)</name>
        <dbReference type="ChEBI" id="CHEBI:29105"/>
        <label>1</label>
    </ligand>
</feature>
<feature type="binding site" evidence="1">
    <location>
        <position position="144"/>
    </location>
    <ligand>
        <name>Zn(2+)</name>
        <dbReference type="ChEBI" id="CHEBI:29105"/>
        <label>1</label>
    </ligand>
</feature>
<feature type="binding site" evidence="1">
    <location>
        <position position="144"/>
    </location>
    <ligand>
        <name>Zn(2+)</name>
        <dbReference type="ChEBI" id="CHEBI:29105"/>
        <label>2</label>
    </ligand>
</feature>
<feature type="binding site" evidence="1">
    <location>
        <position position="178"/>
    </location>
    <ligand>
        <name>Zn(2+)</name>
        <dbReference type="ChEBI" id="CHEBI:29105"/>
        <label>2</label>
    </ligand>
</feature>
<feature type="binding site" evidence="1">
    <location>
        <position position="181"/>
    </location>
    <ligand>
        <name>Zn(2+)</name>
        <dbReference type="ChEBI" id="CHEBI:29105"/>
        <label>3</label>
    </ligand>
</feature>
<feature type="binding site" evidence="1">
    <location>
        <position position="215"/>
    </location>
    <ligand>
        <name>Zn(2+)</name>
        <dbReference type="ChEBI" id="CHEBI:29105"/>
        <label>2</label>
    </ligand>
</feature>
<feature type="binding site" evidence="1">
    <location>
        <position position="228"/>
    </location>
    <ligand>
        <name>Zn(2+)</name>
        <dbReference type="ChEBI" id="CHEBI:29105"/>
        <label>3</label>
    </ligand>
</feature>
<feature type="binding site" evidence="1">
    <location>
        <position position="230"/>
    </location>
    <ligand>
        <name>Zn(2+)</name>
        <dbReference type="ChEBI" id="CHEBI:29105"/>
        <label>3</label>
    </ligand>
</feature>
<feature type="binding site" evidence="1">
    <location>
        <position position="260"/>
    </location>
    <ligand>
        <name>Zn(2+)</name>
        <dbReference type="ChEBI" id="CHEBI:29105"/>
        <label>2</label>
    </ligand>
</feature>
<feature type="strand" evidence="2">
    <location>
        <begin position="4"/>
        <end position="7"/>
    </location>
</feature>
<feature type="helix" evidence="2">
    <location>
        <begin position="14"/>
        <end position="16"/>
    </location>
</feature>
<feature type="helix" evidence="2">
    <location>
        <begin position="17"/>
        <end position="23"/>
    </location>
</feature>
<feature type="strand" evidence="2">
    <location>
        <begin position="27"/>
        <end position="31"/>
    </location>
</feature>
<feature type="strand" evidence="2">
    <location>
        <begin position="37"/>
        <end position="39"/>
    </location>
</feature>
<feature type="helix" evidence="2">
    <location>
        <begin position="46"/>
        <end position="58"/>
    </location>
</feature>
<feature type="helix" evidence="2">
    <location>
        <begin position="63"/>
        <end position="65"/>
    </location>
</feature>
<feature type="strand" evidence="2">
    <location>
        <begin position="66"/>
        <end position="69"/>
    </location>
</feature>
<feature type="helix" evidence="2">
    <location>
        <begin position="81"/>
        <end position="101"/>
    </location>
</feature>
<feature type="strand" evidence="2">
    <location>
        <begin position="105"/>
        <end position="108"/>
    </location>
</feature>
<feature type="helix" evidence="2">
    <location>
        <begin position="118"/>
        <end position="133"/>
    </location>
</feature>
<feature type="strand" evidence="2">
    <location>
        <begin position="140"/>
        <end position="144"/>
    </location>
</feature>
<feature type="helix" evidence="2">
    <location>
        <begin position="157"/>
        <end position="166"/>
    </location>
</feature>
<feature type="helix" evidence="2">
    <location>
        <begin position="170"/>
        <end position="172"/>
    </location>
</feature>
<feature type="strand" evidence="2">
    <location>
        <begin position="173"/>
        <end position="178"/>
    </location>
</feature>
<feature type="helix" evidence="2">
    <location>
        <begin position="179"/>
        <end position="184"/>
    </location>
</feature>
<feature type="helix" evidence="2">
    <location>
        <begin position="192"/>
        <end position="205"/>
    </location>
</feature>
<feature type="helix" evidence="2">
    <location>
        <begin position="208"/>
        <end position="210"/>
    </location>
</feature>
<feature type="strand" evidence="2">
    <location>
        <begin position="211"/>
        <end position="216"/>
    </location>
</feature>
<feature type="strand" evidence="2">
    <location>
        <begin position="218"/>
        <end position="221"/>
    </location>
</feature>
<feature type="strand" evidence="2">
    <location>
        <begin position="235"/>
        <end position="238"/>
    </location>
</feature>
<feature type="helix" evidence="2">
    <location>
        <begin position="239"/>
        <end position="247"/>
    </location>
</feature>
<feature type="helix" evidence="2">
    <location>
        <begin position="250"/>
        <end position="253"/>
    </location>
</feature>
<feature type="strand" evidence="2">
    <location>
        <begin position="257"/>
        <end position="259"/>
    </location>
</feature>
<feature type="helix" evidence="2">
    <location>
        <begin position="265"/>
        <end position="281"/>
    </location>
</feature>
<accession>Q9WYJ7</accession>
<name>END4_THEMA</name>
<organism>
    <name type="scientific">Thermotoga maritima (strain ATCC 43589 / DSM 3109 / JCM 10099 / NBRC 100826 / MSB8)</name>
    <dbReference type="NCBI Taxonomy" id="243274"/>
    <lineage>
        <taxon>Bacteria</taxon>
        <taxon>Thermotogati</taxon>
        <taxon>Thermotogota</taxon>
        <taxon>Thermotogae</taxon>
        <taxon>Thermotogales</taxon>
        <taxon>Thermotogaceae</taxon>
        <taxon>Thermotoga</taxon>
    </lineage>
</organism>
<keyword id="KW-0002">3D-structure</keyword>
<keyword id="KW-0227">DNA damage</keyword>
<keyword id="KW-0234">DNA repair</keyword>
<keyword id="KW-0255">Endonuclease</keyword>
<keyword id="KW-0378">Hydrolase</keyword>
<keyword id="KW-0479">Metal-binding</keyword>
<keyword id="KW-0540">Nuclease</keyword>
<keyword id="KW-1185">Reference proteome</keyword>
<keyword id="KW-0862">Zinc</keyword>
<reference key="1">
    <citation type="journal article" date="1999" name="Nature">
        <title>Evidence for lateral gene transfer between Archaea and Bacteria from genome sequence of Thermotoga maritima.</title>
        <authorList>
            <person name="Nelson K.E."/>
            <person name="Clayton R.A."/>
            <person name="Gill S.R."/>
            <person name="Gwinn M.L."/>
            <person name="Dodson R.J."/>
            <person name="Haft D.H."/>
            <person name="Hickey E.K."/>
            <person name="Peterson J.D."/>
            <person name="Nelson W.C."/>
            <person name="Ketchum K.A."/>
            <person name="McDonald L.A."/>
            <person name="Utterback T.R."/>
            <person name="Malek J.A."/>
            <person name="Linher K.D."/>
            <person name="Garrett M.M."/>
            <person name="Stewart A.M."/>
            <person name="Cotton M.D."/>
            <person name="Pratt M.S."/>
            <person name="Phillips C.A."/>
            <person name="Richardson D.L."/>
            <person name="Heidelberg J.F."/>
            <person name="Sutton G.G."/>
            <person name="Fleischmann R.D."/>
            <person name="Eisen J.A."/>
            <person name="White O."/>
            <person name="Salzberg S.L."/>
            <person name="Smith H.O."/>
            <person name="Venter J.C."/>
            <person name="Fraser C.M."/>
        </authorList>
    </citation>
    <scope>NUCLEOTIDE SEQUENCE [LARGE SCALE GENOMIC DNA]</scope>
    <source>
        <strain>ATCC 43589 / DSM 3109 / JCM 10099 / NBRC 100826 / MSB8</strain>
    </source>
</reference>
<evidence type="ECO:0000255" key="1">
    <source>
        <dbReference type="HAMAP-Rule" id="MF_00152"/>
    </source>
</evidence>
<evidence type="ECO:0007829" key="2">
    <source>
        <dbReference type="PDB" id="4HNO"/>
    </source>
</evidence>
<gene>
    <name evidence="1" type="primary">nfo</name>
    <name type="ordered locus">TM_0362</name>
</gene>